<gene>
    <name evidence="1" type="primary">algL</name>
</gene>
<protein>
    <recommendedName>
        <fullName evidence="1">Alginate lyase</fullName>
        <ecNumber evidence="1">4.2.2.3</ecNumber>
    </recommendedName>
    <alternativeName>
        <fullName evidence="1">Poly(beta-D-mannuronate) lyase</fullName>
    </alternativeName>
</protein>
<name>ALGL_PSEFL</name>
<organism>
    <name type="scientific">Pseudomonas fluorescens</name>
    <dbReference type="NCBI Taxonomy" id="294"/>
    <lineage>
        <taxon>Bacteria</taxon>
        <taxon>Pseudomonadati</taxon>
        <taxon>Pseudomonadota</taxon>
        <taxon>Gammaproteobacteria</taxon>
        <taxon>Pseudomonadales</taxon>
        <taxon>Pseudomonadaceae</taxon>
        <taxon>Pseudomonas</taxon>
    </lineage>
</organism>
<reference key="1">
    <citation type="journal article" date="2003" name="J. Bacteriol.">
        <title>The Pseudomonas fluorescens AlgG protein, but not its mannuronan C-5-epimerase activity, is needed for alginate polymer formation.</title>
        <authorList>
            <person name="Gimmestad M."/>
            <person name="Sletta H."/>
            <person name="Ertesvaag H."/>
            <person name="Bakkevig K."/>
            <person name="Jain S."/>
            <person name="Suh S.-J."/>
            <person name="Skjaak-Braek G."/>
            <person name="Ellingsen T.E."/>
            <person name="Ohman D.E."/>
            <person name="Valla S."/>
        </authorList>
    </citation>
    <scope>NUCLEOTIDE SEQUENCE [GENOMIC DNA]</scope>
    <source>
        <strain>ATCC 17397 / DSM 50091 / CIP 73.25 / NCIMB 10525 / 12</strain>
    </source>
</reference>
<proteinExistence type="inferred from homology"/>
<accession>P59786</accession>
<keyword id="KW-0456">Lyase</keyword>
<keyword id="KW-0574">Periplasm</keyword>
<keyword id="KW-0732">Signal</keyword>
<feature type="signal peptide" evidence="1">
    <location>
        <begin position="1"/>
        <end position="25"/>
    </location>
</feature>
<feature type="chain" id="PRO_0000024919" description="Alginate lyase">
    <location>
        <begin position="26"/>
        <end position="373"/>
    </location>
</feature>
<feature type="binding site" evidence="1">
    <location>
        <begin position="66"/>
        <end position="67"/>
    </location>
    <ligand>
        <name>substrate</name>
    </ligand>
</feature>
<feature type="binding site" evidence="1">
    <location>
        <begin position="139"/>
        <end position="140"/>
    </location>
    <ligand>
        <name>substrate</name>
    </ligand>
</feature>
<feature type="binding site" evidence="1">
    <location>
        <position position="257"/>
    </location>
    <ligand>
        <name>substrate</name>
    </ligand>
</feature>
<dbReference type="EC" id="4.2.2.3" evidence="1"/>
<dbReference type="EMBL" id="AF527790">
    <property type="protein sequence ID" value="AAP46696.1"/>
    <property type="molecule type" value="Genomic_DNA"/>
</dbReference>
<dbReference type="SMR" id="P59786"/>
<dbReference type="CAZy" id="PL5">
    <property type="family name" value="Polysaccharide Lyase Family 5"/>
</dbReference>
<dbReference type="PATRIC" id="fig|294.129.peg.5007"/>
<dbReference type="eggNOG" id="ENOG502ZAMJ">
    <property type="taxonomic scope" value="Bacteria"/>
</dbReference>
<dbReference type="GO" id="GO:0042597">
    <property type="term" value="C:periplasmic space"/>
    <property type="evidence" value="ECO:0007669"/>
    <property type="project" value="UniProtKB-SubCell"/>
</dbReference>
<dbReference type="GO" id="GO:0045135">
    <property type="term" value="F:poly(beta-D-mannuronate) lyase activity"/>
    <property type="evidence" value="ECO:0007669"/>
    <property type="project" value="UniProtKB-UniRule"/>
</dbReference>
<dbReference type="GO" id="GO:0042122">
    <property type="term" value="P:alginic acid catabolic process"/>
    <property type="evidence" value="ECO:0007669"/>
    <property type="project" value="UniProtKB-UniRule"/>
</dbReference>
<dbReference type="CDD" id="cd00244">
    <property type="entry name" value="AlgLyase"/>
    <property type="match status" value="1"/>
</dbReference>
<dbReference type="Gene3D" id="1.50.10.100">
    <property type="entry name" value="Chondroitin AC/alginate lyase"/>
    <property type="match status" value="1"/>
</dbReference>
<dbReference type="HAMAP" id="MF_00557">
    <property type="entry name" value="Alginate_lyase"/>
    <property type="match status" value="1"/>
</dbReference>
<dbReference type="InterPro" id="IPR022859">
    <property type="entry name" value="Alginate_lyase"/>
</dbReference>
<dbReference type="InterPro" id="IPR008397">
    <property type="entry name" value="Alginate_lyase_dom"/>
</dbReference>
<dbReference type="InterPro" id="IPR008929">
    <property type="entry name" value="Chondroitin_lyas"/>
</dbReference>
<dbReference type="NCBIfam" id="NF001467">
    <property type="entry name" value="PRK00325.1-2"/>
    <property type="match status" value="1"/>
</dbReference>
<dbReference type="NCBIfam" id="NF001468">
    <property type="entry name" value="PRK00325.1-3"/>
    <property type="match status" value="1"/>
</dbReference>
<dbReference type="Pfam" id="PF05426">
    <property type="entry name" value="Alginate_lyase"/>
    <property type="match status" value="1"/>
</dbReference>
<dbReference type="SUPFAM" id="SSF48230">
    <property type="entry name" value="Chondroitin AC/alginate lyase"/>
    <property type="match status" value="1"/>
</dbReference>
<evidence type="ECO:0000255" key="1">
    <source>
        <dbReference type="HAMAP-Rule" id="MF_00557"/>
    </source>
</evidence>
<sequence>MRLPMQKLLIPTLLGLAMFAGSVNAAAPLRPPQGYFAPVEAFKTGDFKNDCDAMPPPYTGSLQFRSKYEGSDKARSTLNVQSEKAFRDSTADITKLEKDTSKRVMQFMRDGRPEQLECTLNWLTSWAKADALMSKDFNHTGKSMRKWALGSMASAYVRLKFSDSHPLANHQQESQLIEAWFNKLADQVVSDWDNLPLEKTNNHSYWAAWSVMATSVATNRRDLFDWAVKEYKVGVNQVDDQGFLPNELKRQQRALSYHNYALPPLSMIASFALVNGVDLRQENNSALKRLGDKVLAGVKDPEIFEKKNGKEQDMKDLKEDMKYAWLEPFCTLYTCAPDVIERKHGMQPFKTFRLGGDLTKVYDPTHEKGNKGS</sequence>
<comment type="function">
    <text evidence="1">Catalyzes the depolymerization of alginate by cleaving the beta-1,4 glycosidic bond between two adjacent sugar residues via a beta-elimination mechanism. May serve to degrade mislocalized alginate that is trapped in the periplasmic space.</text>
</comment>
<comment type="catalytic activity">
    <reaction evidence="1">
        <text>Eliminative cleavage of alginate to give oligosaccharides with 4-deoxy-alpha-L-erythro-hex-4-enuronosyl groups at their non-reducing ends and beta-D-mannuronate at their reducing end.</text>
        <dbReference type="EC" id="4.2.2.3"/>
    </reaction>
</comment>
<comment type="subcellular location">
    <subcellularLocation>
        <location evidence="1">Periplasm</location>
    </subcellularLocation>
</comment>
<comment type="similarity">
    <text evidence="1">Belongs to the polysaccharide lyase 5 family.</text>
</comment>